<reference key="1">
    <citation type="journal article" date="2005" name="Nat. Genet.">
        <title>The complete genome sequence of Francisella tularensis, the causative agent of tularemia.</title>
        <authorList>
            <person name="Larsson P."/>
            <person name="Oyston P.C.F."/>
            <person name="Chain P."/>
            <person name="Chu M.C."/>
            <person name="Duffield M."/>
            <person name="Fuxelius H.-H."/>
            <person name="Garcia E."/>
            <person name="Haelltorp G."/>
            <person name="Johansson D."/>
            <person name="Isherwood K.E."/>
            <person name="Karp P.D."/>
            <person name="Larsson E."/>
            <person name="Liu Y."/>
            <person name="Michell S."/>
            <person name="Prior J."/>
            <person name="Prior R."/>
            <person name="Malfatti S."/>
            <person name="Sjoestedt A."/>
            <person name="Svensson K."/>
            <person name="Thompson N."/>
            <person name="Vergez L."/>
            <person name="Wagg J.K."/>
            <person name="Wren B.W."/>
            <person name="Lindler L.E."/>
            <person name="Andersson S.G.E."/>
            <person name="Forsman M."/>
            <person name="Titball R.W."/>
        </authorList>
    </citation>
    <scope>NUCLEOTIDE SEQUENCE [LARGE SCALE GENOMIC DNA]</scope>
    <source>
        <strain>SCHU S4 / Schu 4</strain>
    </source>
</reference>
<comment type="function">
    <text evidence="1">Catalyzes the 2-thiolation of uridine at the wobble position (U34) of tRNA, leading to the formation of s(2)U34.</text>
</comment>
<comment type="catalytic activity">
    <reaction evidence="1">
        <text>S-sulfanyl-L-cysteinyl-[protein] + uridine(34) in tRNA + AH2 + ATP = 2-thiouridine(34) in tRNA + L-cysteinyl-[protein] + A + AMP + diphosphate + H(+)</text>
        <dbReference type="Rhea" id="RHEA:47032"/>
        <dbReference type="Rhea" id="RHEA-COMP:10131"/>
        <dbReference type="Rhea" id="RHEA-COMP:11726"/>
        <dbReference type="Rhea" id="RHEA-COMP:11727"/>
        <dbReference type="Rhea" id="RHEA-COMP:11728"/>
        <dbReference type="ChEBI" id="CHEBI:13193"/>
        <dbReference type="ChEBI" id="CHEBI:15378"/>
        <dbReference type="ChEBI" id="CHEBI:17499"/>
        <dbReference type="ChEBI" id="CHEBI:29950"/>
        <dbReference type="ChEBI" id="CHEBI:30616"/>
        <dbReference type="ChEBI" id="CHEBI:33019"/>
        <dbReference type="ChEBI" id="CHEBI:61963"/>
        <dbReference type="ChEBI" id="CHEBI:65315"/>
        <dbReference type="ChEBI" id="CHEBI:87170"/>
        <dbReference type="ChEBI" id="CHEBI:456215"/>
        <dbReference type="EC" id="2.8.1.13"/>
    </reaction>
</comment>
<comment type="subcellular location">
    <subcellularLocation>
        <location evidence="1">Cytoplasm</location>
    </subcellularLocation>
</comment>
<comment type="similarity">
    <text evidence="1">Belongs to the MnmA/TRMU family.</text>
</comment>
<comment type="sequence caution" evidence="2">
    <conflict type="erroneous initiation">
        <sequence resource="EMBL-CDS" id="CAG46310"/>
    </conflict>
</comment>
<evidence type="ECO:0000255" key="1">
    <source>
        <dbReference type="HAMAP-Rule" id="MF_00144"/>
    </source>
</evidence>
<evidence type="ECO:0000305" key="2"/>
<keyword id="KW-0067">ATP-binding</keyword>
<keyword id="KW-0963">Cytoplasm</keyword>
<keyword id="KW-1015">Disulfide bond</keyword>
<keyword id="KW-0547">Nucleotide-binding</keyword>
<keyword id="KW-1185">Reference proteome</keyword>
<keyword id="KW-0694">RNA-binding</keyword>
<keyword id="KW-0808">Transferase</keyword>
<keyword id="KW-0819">tRNA processing</keyword>
<keyword id="KW-0820">tRNA-binding</keyword>
<feature type="chain" id="PRO_0000121633" description="tRNA-specific 2-thiouridylase MnmA">
    <location>
        <begin position="1"/>
        <end position="359"/>
    </location>
</feature>
<feature type="region of interest" description="Interaction with target base in tRNA" evidence="1">
    <location>
        <begin position="95"/>
        <end position="97"/>
    </location>
</feature>
<feature type="region of interest" description="Interaction with tRNA" evidence="1">
    <location>
        <begin position="147"/>
        <end position="149"/>
    </location>
</feature>
<feature type="region of interest" description="Interaction with tRNA" evidence="1">
    <location>
        <begin position="309"/>
        <end position="310"/>
    </location>
</feature>
<feature type="active site" description="Nucleophile" evidence="1">
    <location>
        <position position="100"/>
    </location>
</feature>
<feature type="active site" description="Cysteine persulfide intermediate" evidence="1">
    <location>
        <position position="197"/>
    </location>
</feature>
<feature type="binding site" evidence="1">
    <location>
        <begin position="9"/>
        <end position="16"/>
    </location>
    <ligand>
        <name>ATP</name>
        <dbReference type="ChEBI" id="CHEBI:30616"/>
    </ligand>
</feature>
<feature type="binding site" evidence="1">
    <location>
        <position position="35"/>
    </location>
    <ligand>
        <name>ATP</name>
        <dbReference type="ChEBI" id="CHEBI:30616"/>
    </ligand>
</feature>
<feature type="binding site" evidence="1">
    <location>
        <position position="124"/>
    </location>
    <ligand>
        <name>ATP</name>
        <dbReference type="ChEBI" id="CHEBI:30616"/>
    </ligand>
</feature>
<feature type="site" description="Interaction with tRNA" evidence="1">
    <location>
        <position position="125"/>
    </location>
</feature>
<feature type="site" description="Interaction with tRNA" evidence="1">
    <location>
        <position position="342"/>
    </location>
</feature>
<feature type="disulfide bond" description="Alternate" evidence="1">
    <location>
        <begin position="100"/>
        <end position="197"/>
    </location>
</feature>
<protein>
    <recommendedName>
        <fullName evidence="1">tRNA-specific 2-thiouridylase MnmA</fullName>
        <ecNumber evidence="1">2.8.1.13</ecNumber>
    </recommendedName>
</protein>
<gene>
    <name evidence="1" type="primary">mnmA</name>
    <name type="synonym">trmU</name>
    <name type="ordered locus">FTT_1677c</name>
</gene>
<proteinExistence type="inferred from homology"/>
<sequence>MENKKVIVGISGGVDSSVSALLLKQQGYDVTGVFMKNWEEDDTDEFCSAEQDIADAQAVCDSIGIPFKKINFAAEYWDNVFEHFLIEYKAGRTPNPDILCNKEIKFKAFLSYVHLLGGDYIATGHYAQTRLAADGSVQLVKGLDDNKDQTYFLYTLGQEQLRQTIFPIGNIEKSKVREIAKENNLVTFDKKDSTGICFIGERKFKEFLSKYLPAQKGEIHDENGIKIGMHDGLMYYTIGQRQGLGIGGVKDRPEVPWFAAKKDLENNVLIAVQGHDHPLLFKQSLQAIELSWVAGMAPADKFRCAAKVRYRQKDQSCEVEVNQDGSVNVTFDQPQRAITPGQSVVFYIDDVCLGGGVII</sequence>
<dbReference type="EC" id="2.8.1.13" evidence="1"/>
<dbReference type="EMBL" id="AJ749949">
    <property type="protein sequence ID" value="CAG46310.1"/>
    <property type="status" value="ALT_INIT"/>
    <property type="molecule type" value="Genomic_DNA"/>
</dbReference>
<dbReference type="RefSeq" id="WP_003022640.1">
    <property type="nucleotide sequence ID" value="NC_006570.2"/>
</dbReference>
<dbReference type="RefSeq" id="YP_170583.1">
    <property type="nucleotide sequence ID" value="NC_006570.2"/>
</dbReference>
<dbReference type="SMR" id="Q5NEF9"/>
<dbReference type="STRING" id="177416.FTT_1677c"/>
<dbReference type="DNASU" id="3191949"/>
<dbReference type="EnsemblBacteria" id="CAG46310">
    <property type="protein sequence ID" value="CAG46310"/>
    <property type="gene ID" value="FTT_1677c"/>
</dbReference>
<dbReference type="KEGG" id="ftu:FTT_1677c"/>
<dbReference type="eggNOG" id="COG0482">
    <property type="taxonomic scope" value="Bacteria"/>
</dbReference>
<dbReference type="OrthoDB" id="9800696at2"/>
<dbReference type="Proteomes" id="UP000001174">
    <property type="component" value="Chromosome"/>
</dbReference>
<dbReference type="GO" id="GO:0005737">
    <property type="term" value="C:cytoplasm"/>
    <property type="evidence" value="ECO:0007669"/>
    <property type="project" value="UniProtKB-SubCell"/>
</dbReference>
<dbReference type="GO" id="GO:0005524">
    <property type="term" value="F:ATP binding"/>
    <property type="evidence" value="ECO:0007669"/>
    <property type="project" value="UniProtKB-KW"/>
</dbReference>
<dbReference type="GO" id="GO:0000049">
    <property type="term" value="F:tRNA binding"/>
    <property type="evidence" value="ECO:0007669"/>
    <property type="project" value="UniProtKB-KW"/>
</dbReference>
<dbReference type="GO" id="GO:0103016">
    <property type="term" value="F:tRNA-uridine 2-sulfurtransferase activity"/>
    <property type="evidence" value="ECO:0007669"/>
    <property type="project" value="UniProtKB-EC"/>
</dbReference>
<dbReference type="GO" id="GO:0002143">
    <property type="term" value="P:tRNA wobble position uridine thiolation"/>
    <property type="evidence" value="ECO:0007669"/>
    <property type="project" value="TreeGrafter"/>
</dbReference>
<dbReference type="CDD" id="cd01998">
    <property type="entry name" value="MnmA_TRMU-like"/>
    <property type="match status" value="1"/>
</dbReference>
<dbReference type="FunFam" id="2.30.30.280:FF:000001">
    <property type="entry name" value="tRNA-specific 2-thiouridylase MnmA"/>
    <property type="match status" value="1"/>
</dbReference>
<dbReference type="FunFam" id="2.40.30.10:FF:000023">
    <property type="entry name" value="tRNA-specific 2-thiouridylase MnmA"/>
    <property type="match status" value="1"/>
</dbReference>
<dbReference type="FunFam" id="3.40.50.620:FF:000004">
    <property type="entry name" value="tRNA-specific 2-thiouridylase MnmA"/>
    <property type="match status" value="1"/>
</dbReference>
<dbReference type="Gene3D" id="2.30.30.280">
    <property type="entry name" value="Adenine nucleotide alpha hydrolases-like domains"/>
    <property type="match status" value="1"/>
</dbReference>
<dbReference type="Gene3D" id="3.40.50.620">
    <property type="entry name" value="HUPs"/>
    <property type="match status" value="1"/>
</dbReference>
<dbReference type="Gene3D" id="2.40.30.10">
    <property type="entry name" value="Translation factors"/>
    <property type="match status" value="1"/>
</dbReference>
<dbReference type="HAMAP" id="MF_00144">
    <property type="entry name" value="tRNA_thiouridyl_MnmA"/>
    <property type="match status" value="1"/>
</dbReference>
<dbReference type="InterPro" id="IPR004506">
    <property type="entry name" value="MnmA-like"/>
</dbReference>
<dbReference type="InterPro" id="IPR046885">
    <property type="entry name" value="MnmA-like_C"/>
</dbReference>
<dbReference type="InterPro" id="IPR046884">
    <property type="entry name" value="MnmA-like_central"/>
</dbReference>
<dbReference type="InterPro" id="IPR023382">
    <property type="entry name" value="MnmA-like_central_sf"/>
</dbReference>
<dbReference type="InterPro" id="IPR014729">
    <property type="entry name" value="Rossmann-like_a/b/a_fold"/>
</dbReference>
<dbReference type="NCBIfam" id="NF001138">
    <property type="entry name" value="PRK00143.1"/>
    <property type="match status" value="1"/>
</dbReference>
<dbReference type="NCBIfam" id="TIGR00420">
    <property type="entry name" value="trmU"/>
    <property type="match status" value="1"/>
</dbReference>
<dbReference type="PANTHER" id="PTHR11933:SF5">
    <property type="entry name" value="MITOCHONDRIAL TRNA-SPECIFIC 2-THIOURIDYLASE 1"/>
    <property type="match status" value="1"/>
</dbReference>
<dbReference type="PANTHER" id="PTHR11933">
    <property type="entry name" value="TRNA 5-METHYLAMINOMETHYL-2-THIOURIDYLATE -METHYLTRANSFERASE"/>
    <property type="match status" value="1"/>
</dbReference>
<dbReference type="Pfam" id="PF03054">
    <property type="entry name" value="tRNA_Me_trans"/>
    <property type="match status" value="1"/>
</dbReference>
<dbReference type="Pfam" id="PF20258">
    <property type="entry name" value="tRNA_Me_trans_C"/>
    <property type="match status" value="1"/>
</dbReference>
<dbReference type="Pfam" id="PF20259">
    <property type="entry name" value="tRNA_Me_trans_M"/>
    <property type="match status" value="1"/>
</dbReference>
<dbReference type="SUPFAM" id="SSF52402">
    <property type="entry name" value="Adenine nucleotide alpha hydrolases-like"/>
    <property type="match status" value="1"/>
</dbReference>
<name>MNMA_FRATT</name>
<organism>
    <name type="scientific">Francisella tularensis subsp. tularensis (strain SCHU S4 / Schu 4)</name>
    <dbReference type="NCBI Taxonomy" id="177416"/>
    <lineage>
        <taxon>Bacteria</taxon>
        <taxon>Pseudomonadati</taxon>
        <taxon>Pseudomonadota</taxon>
        <taxon>Gammaproteobacteria</taxon>
        <taxon>Thiotrichales</taxon>
        <taxon>Francisellaceae</taxon>
        <taxon>Francisella</taxon>
    </lineage>
</organism>
<accession>Q5NEF9</accession>